<keyword id="KW-0963">Cytoplasm</keyword>
<keyword id="KW-0396">Initiation factor</keyword>
<keyword id="KW-0648">Protein biosynthesis</keyword>
<organism>
    <name type="scientific">Drosophila erecta</name>
    <name type="common">Fruit fly</name>
    <dbReference type="NCBI Taxonomy" id="7220"/>
    <lineage>
        <taxon>Eukaryota</taxon>
        <taxon>Metazoa</taxon>
        <taxon>Ecdysozoa</taxon>
        <taxon>Arthropoda</taxon>
        <taxon>Hexapoda</taxon>
        <taxon>Insecta</taxon>
        <taxon>Pterygota</taxon>
        <taxon>Neoptera</taxon>
        <taxon>Endopterygota</taxon>
        <taxon>Diptera</taxon>
        <taxon>Brachycera</taxon>
        <taxon>Muscomorpha</taxon>
        <taxon>Ephydroidea</taxon>
        <taxon>Drosophilidae</taxon>
        <taxon>Drosophila</taxon>
        <taxon>Sophophora</taxon>
    </lineage>
</organism>
<feature type="chain" id="PRO_0000364299" description="Eukaryotic translation initiation factor 3 subunit F-1">
    <location>
        <begin position="1"/>
        <end position="280"/>
    </location>
</feature>
<feature type="domain" description="MPN" evidence="2">
    <location>
        <begin position="8"/>
        <end position="138"/>
    </location>
</feature>
<evidence type="ECO:0000255" key="1">
    <source>
        <dbReference type="HAMAP-Rule" id="MF_03005"/>
    </source>
</evidence>
<evidence type="ECO:0000255" key="2">
    <source>
        <dbReference type="PROSITE-ProRule" id="PRU01182"/>
    </source>
</evidence>
<sequence length="280" mass="31105">MSALNLTVRVHPVVLFQVVDAFERRNADSHRVIGTLLGSVDKGVVEVTNCFCVPHKEHDDQVEAELSYALDMYDLNRKVNSNESVVGWWATGNDVTNHSSVIHEYYARECNNPVHLTVDTSLQGGRMGLRAYVCIQLGVPGGKSGCMFTPIPVELTSYEPETFGLKLLQKTVGVSPAHRPKTVPPMLDLAQISEASTKLQSLLDLILKYVDDVIAHKVTPDNAVGRQLLDLIHSVPHMTHEQFTQMFNANVRNLLLVITLSQLIKTQLQLNEKLTFLPTA</sequence>
<proteinExistence type="inferred from homology"/>
<dbReference type="EMBL" id="CH954181">
    <property type="protein sequence ID" value="EDV47812.1"/>
    <property type="molecule type" value="Genomic_DNA"/>
</dbReference>
<dbReference type="SMR" id="B3P239"/>
<dbReference type="EnsemblMetazoa" id="FBtr0131487">
    <property type="protein sequence ID" value="FBpp0129979"/>
    <property type="gene ID" value="FBgn0103733"/>
</dbReference>
<dbReference type="EnsemblMetazoa" id="XM_001978818.3">
    <property type="protein sequence ID" value="XP_001978854.1"/>
    <property type="gene ID" value="LOC6551919"/>
</dbReference>
<dbReference type="GeneID" id="6551919"/>
<dbReference type="KEGG" id="der:6551919"/>
<dbReference type="CTD" id="40587"/>
<dbReference type="eggNOG" id="KOG2975">
    <property type="taxonomic scope" value="Eukaryota"/>
</dbReference>
<dbReference type="HOGENOM" id="CLU_027018_0_1_1"/>
<dbReference type="OMA" id="EYFVHFH"/>
<dbReference type="OrthoDB" id="25498at2759"/>
<dbReference type="PhylomeDB" id="B3P239"/>
<dbReference type="Proteomes" id="UP000008711">
    <property type="component" value="Unassembled WGS sequence"/>
</dbReference>
<dbReference type="GO" id="GO:0016282">
    <property type="term" value="C:eukaryotic 43S preinitiation complex"/>
    <property type="evidence" value="ECO:0007669"/>
    <property type="project" value="UniProtKB-UniRule"/>
</dbReference>
<dbReference type="GO" id="GO:0033290">
    <property type="term" value="C:eukaryotic 48S preinitiation complex"/>
    <property type="evidence" value="ECO:0007669"/>
    <property type="project" value="UniProtKB-UniRule"/>
</dbReference>
<dbReference type="GO" id="GO:0071541">
    <property type="term" value="C:eukaryotic translation initiation factor 3 complex, eIF3m"/>
    <property type="evidence" value="ECO:0007669"/>
    <property type="project" value="TreeGrafter"/>
</dbReference>
<dbReference type="GO" id="GO:0140492">
    <property type="term" value="F:metal-dependent deubiquitinase activity"/>
    <property type="evidence" value="ECO:0007669"/>
    <property type="project" value="EnsemblMetazoa"/>
</dbReference>
<dbReference type="GO" id="GO:0003743">
    <property type="term" value="F:translation initiation factor activity"/>
    <property type="evidence" value="ECO:0007669"/>
    <property type="project" value="UniProtKB-UniRule"/>
</dbReference>
<dbReference type="GO" id="GO:0031369">
    <property type="term" value="F:translation initiation factor binding"/>
    <property type="evidence" value="ECO:0007669"/>
    <property type="project" value="InterPro"/>
</dbReference>
<dbReference type="GO" id="GO:0140367">
    <property type="term" value="P:antibacterial innate immune response"/>
    <property type="evidence" value="ECO:0007669"/>
    <property type="project" value="EnsemblMetazoa"/>
</dbReference>
<dbReference type="GO" id="GO:0050829">
    <property type="term" value="P:defense response to Gram-negative bacterium"/>
    <property type="evidence" value="ECO:0007669"/>
    <property type="project" value="EnsemblMetazoa"/>
</dbReference>
<dbReference type="GO" id="GO:0001732">
    <property type="term" value="P:formation of cytoplasmic translation initiation complex"/>
    <property type="evidence" value="ECO:0007669"/>
    <property type="project" value="UniProtKB-UniRule"/>
</dbReference>
<dbReference type="GO" id="GO:0045747">
    <property type="term" value="P:positive regulation of Notch signaling pathway"/>
    <property type="evidence" value="ECO:0007669"/>
    <property type="project" value="EnsemblMetazoa"/>
</dbReference>
<dbReference type="GO" id="GO:0061059">
    <property type="term" value="P:positive regulation of peptidoglycan recognition protein signaling pathway"/>
    <property type="evidence" value="ECO:0007669"/>
    <property type="project" value="EnsemblMetazoa"/>
</dbReference>
<dbReference type="CDD" id="cd08064">
    <property type="entry name" value="MPN_eIF3f"/>
    <property type="match status" value="1"/>
</dbReference>
<dbReference type="FunFam" id="3.40.140.10:FF:000014">
    <property type="entry name" value="Eukaryotic translation initiation factor 3 subunit F"/>
    <property type="match status" value="1"/>
</dbReference>
<dbReference type="Gene3D" id="3.40.140.10">
    <property type="entry name" value="Cytidine Deaminase, domain 2"/>
    <property type="match status" value="1"/>
</dbReference>
<dbReference type="HAMAP" id="MF_03005">
    <property type="entry name" value="eIF3f"/>
    <property type="match status" value="1"/>
</dbReference>
<dbReference type="InterPro" id="IPR027531">
    <property type="entry name" value="eIF3f"/>
</dbReference>
<dbReference type="InterPro" id="IPR024969">
    <property type="entry name" value="EIF3F/CSN6-like_C"/>
</dbReference>
<dbReference type="InterPro" id="IPR000555">
    <property type="entry name" value="JAMM/MPN+_dom"/>
</dbReference>
<dbReference type="InterPro" id="IPR037518">
    <property type="entry name" value="MPN"/>
</dbReference>
<dbReference type="PANTHER" id="PTHR10540:SF6">
    <property type="entry name" value="EUKARYOTIC TRANSLATION INITIATION FACTOR 3 SUBUNIT F"/>
    <property type="match status" value="1"/>
</dbReference>
<dbReference type="PANTHER" id="PTHR10540">
    <property type="entry name" value="EUKARYOTIC TRANSLATION INITIATION FACTOR 3 SUBUNIT F-RELATED"/>
    <property type="match status" value="1"/>
</dbReference>
<dbReference type="Pfam" id="PF01398">
    <property type="entry name" value="JAB"/>
    <property type="match status" value="1"/>
</dbReference>
<dbReference type="Pfam" id="PF13012">
    <property type="entry name" value="MitMem_reg"/>
    <property type="match status" value="1"/>
</dbReference>
<dbReference type="SMART" id="SM00232">
    <property type="entry name" value="JAB_MPN"/>
    <property type="match status" value="1"/>
</dbReference>
<dbReference type="PROSITE" id="PS50249">
    <property type="entry name" value="MPN"/>
    <property type="match status" value="1"/>
</dbReference>
<gene>
    <name evidence="1" type="primary">eIF3f1</name>
    <name evidence="1" type="synonym">eIF3-S5-1</name>
    <name type="ORF">GG11433</name>
</gene>
<accession>B3P239</accession>
<protein>
    <recommendedName>
        <fullName evidence="1">Eukaryotic translation initiation factor 3 subunit F-1</fullName>
        <shortName evidence="1">eIF3f-1</shortName>
    </recommendedName>
    <alternativeName>
        <fullName evidence="1">Eukaryotic translation initiation factor 3 subunit 5-1</fullName>
    </alternativeName>
</protein>
<comment type="function">
    <text evidence="1">Component of the eukaryotic translation initiation factor 3 (eIF-3) complex, which is involved in protein synthesis of a specialized repertoire of mRNAs and, together with other initiation factors, stimulates binding of mRNA and methionyl-tRNAi to the 40S ribosome. The eIF-3 complex specifically targets and initiates translation of a subset of mRNAs involved in cell proliferation.</text>
</comment>
<comment type="subunit">
    <text evidence="1">Component of the eukaryotic translation initiation factor 3 (eIF-3) complex. The eIF-3 complex interacts with pix.</text>
</comment>
<comment type="subcellular location">
    <subcellularLocation>
        <location evidence="1">Cytoplasm</location>
    </subcellularLocation>
</comment>
<comment type="similarity">
    <text evidence="1">Belongs to the eIF-3 subunit F family.</text>
</comment>
<name>EI3F1_DROER</name>
<reference key="1">
    <citation type="journal article" date="2007" name="Nature">
        <title>Evolution of genes and genomes on the Drosophila phylogeny.</title>
        <authorList>
            <consortium name="Drosophila 12 genomes consortium"/>
        </authorList>
    </citation>
    <scope>NUCLEOTIDE SEQUENCE [LARGE SCALE GENOMIC DNA]</scope>
    <source>
        <strain>Tucson 14021-0224.01</strain>
    </source>
</reference>